<accession>Q8PJ43</accession>
<sequence length="435" mass="49445">MSEFRQATDAFASNPVESKQEIRNYTMNFGPQHPAAHGVLRLILEMDGETVVRADPHIGLLHRGTEKLAESKPFNQSVPYMDRLDYVSMMCNEHAYVRAIESLMGIQAPERAQYIRTMFDEITRIKNHLMWVGSNALDLGAMAVMLYAFREREELMDVYEAVSGARMHAAYYRPGGVYRDLPDRMPQYKESRWHKGGALKKRNAGREGTMLDFLEEFTNTFPARVDEYETLLTDNRIWKQRTVDVGIISPDLARAWGMTGPMLRGSGIEWDLRKKQPYAKYDAVDFDIPVGTNGDCYDRYLVRVAEMRESNRIIKQCVKWLKANPGPVMVTNFKVAPPSREGMKDDMEALIHHFKLFSEGYCVPAGETYSAVEAPKGEFGCYLMSDGANKPFRVHLRAPGFAHLSSMDAVVRGYLLADVVAMIGTYDLVFGEVDR</sequence>
<dbReference type="EC" id="7.1.1.-" evidence="1"/>
<dbReference type="EMBL" id="AE008923">
    <property type="protein sequence ID" value="AAM37547.1"/>
    <property type="molecule type" value="Genomic_DNA"/>
</dbReference>
<dbReference type="RefSeq" id="WP_003485545.1">
    <property type="nucleotide sequence ID" value="NC_003919.1"/>
</dbReference>
<dbReference type="SMR" id="Q8PJ43"/>
<dbReference type="KEGG" id="xac:XAC2701"/>
<dbReference type="eggNOG" id="COG0649">
    <property type="taxonomic scope" value="Bacteria"/>
</dbReference>
<dbReference type="HOGENOM" id="CLU_015134_1_1_6"/>
<dbReference type="Proteomes" id="UP000000576">
    <property type="component" value="Chromosome"/>
</dbReference>
<dbReference type="GO" id="GO:0005886">
    <property type="term" value="C:plasma membrane"/>
    <property type="evidence" value="ECO:0007669"/>
    <property type="project" value="UniProtKB-SubCell"/>
</dbReference>
<dbReference type="GO" id="GO:0051287">
    <property type="term" value="F:NAD binding"/>
    <property type="evidence" value="ECO:0007669"/>
    <property type="project" value="InterPro"/>
</dbReference>
<dbReference type="GO" id="GO:0050136">
    <property type="term" value="F:NADH:ubiquinone reductase (non-electrogenic) activity"/>
    <property type="evidence" value="ECO:0007669"/>
    <property type="project" value="UniProtKB-UniRule"/>
</dbReference>
<dbReference type="GO" id="GO:0048038">
    <property type="term" value="F:quinone binding"/>
    <property type="evidence" value="ECO:0007669"/>
    <property type="project" value="UniProtKB-KW"/>
</dbReference>
<dbReference type="FunFam" id="1.10.645.10:FF:000005">
    <property type="entry name" value="NADH-quinone oxidoreductase subunit D"/>
    <property type="match status" value="1"/>
</dbReference>
<dbReference type="Gene3D" id="1.10.645.10">
    <property type="entry name" value="Cytochrome-c3 Hydrogenase, chain B"/>
    <property type="match status" value="1"/>
</dbReference>
<dbReference type="HAMAP" id="MF_01358">
    <property type="entry name" value="NDH1_NuoD"/>
    <property type="match status" value="1"/>
</dbReference>
<dbReference type="InterPro" id="IPR001135">
    <property type="entry name" value="NADH_Q_OxRdtase_suD"/>
</dbReference>
<dbReference type="InterPro" id="IPR014029">
    <property type="entry name" value="NADH_UbQ_OxRdtase_49kDa_CS"/>
</dbReference>
<dbReference type="InterPro" id="IPR022885">
    <property type="entry name" value="NDH1_su_D/H"/>
</dbReference>
<dbReference type="InterPro" id="IPR029014">
    <property type="entry name" value="NiFe-Hase_large"/>
</dbReference>
<dbReference type="NCBIfam" id="TIGR01962">
    <property type="entry name" value="NuoD"/>
    <property type="match status" value="1"/>
</dbReference>
<dbReference type="NCBIfam" id="NF004739">
    <property type="entry name" value="PRK06075.1"/>
    <property type="match status" value="1"/>
</dbReference>
<dbReference type="PANTHER" id="PTHR11993:SF10">
    <property type="entry name" value="NADH DEHYDROGENASE [UBIQUINONE] IRON-SULFUR PROTEIN 2, MITOCHONDRIAL"/>
    <property type="match status" value="1"/>
</dbReference>
<dbReference type="PANTHER" id="PTHR11993">
    <property type="entry name" value="NADH-UBIQUINONE OXIDOREDUCTASE 49 KDA SUBUNIT"/>
    <property type="match status" value="1"/>
</dbReference>
<dbReference type="Pfam" id="PF00346">
    <property type="entry name" value="Complex1_49kDa"/>
    <property type="match status" value="1"/>
</dbReference>
<dbReference type="SUPFAM" id="SSF56762">
    <property type="entry name" value="HydB/Nqo4-like"/>
    <property type="match status" value="1"/>
</dbReference>
<dbReference type="PROSITE" id="PS00535">
    <property type="entry name" value="COMPLEX1_49K"/>
    <property type="match status" value="1"/>
</dbReference>
<reference key="1">
    <citation type="journal article" date="2002" name="Nature">
        <title>Comparison of the genomes of two Xanthomonas pathogens with differing host specificities.</title>
        <authorList>
            <person name="da Silva A.C.R."/>
            <person name="Ferro J.A."/>
            <person name="Reinach F.C."/>
            <person name="Farah C.S."/>
            <person name="Furlan L.R."/>
            <person name="Quaggio R.B."/>
            <person name="Monteiro-Vitorello C.B."/>
            <person name="Van Sluys M.A."/>
            <person name="Almeida N.F. Jr."/>
            <person name="Alves L.M.C."/>
            <person name="do Amaral A.M."/>
            <person name="Bertolini M.C."/>
            <person name="Camargo L.E.A."/>
            <person name="Camarotte G."/>
            <person name="Cannavan F."/>
            <person name="Cardozo J."/>
            <person name="Chambergo F."/>
            <person name="Ciapina L.P."/>
            <person name="Cicarelli R.M.B."/>
            <person name="Coutinho L.L."/>
            <person name="Cursino-Santos J.R."/>
            <person name="El-Dorry H."/>
            <person name="Faria J.B."/>
            <person name="Ferreira A.J.S."/>
            <person name="Ferreira R.C.C."/>
            <person name="Ferro M.I.T."/>
            <person name="Formighieri E.F."/>
            <person name="Franco M.C."/>
            <person name="Greggio C.C."/>
            <person name="Gruber A."/>
            <person name="Katsuyama A.M."/>
            <person name="Kishi L.T."/>
            <person name="Leite R.P."/>
            <person name="Lemos E.G.M."/>
            <person name="Lemos M.V.F."/>
            <person name="Locali E.C."/>
            <person name="Machado M.A."/>
            <person name="Madeira A.M.B.N."/>
            <person name="Martinez-Rossi N.M."/>
            <person name="Martins E.C."/>
            <person name="Meidanis J."/>
            <person name="Menck C.F.M."/>
            <person name="Miyaki C.Y."/>
            <person name="Moon D.H."/>
            <person name="Moreira L.M."/>
            <person name="Novo M.T.M."/>
            <person name="Okura V.K."/>
            <person name="Oliveira M.C."/>
            <person name="Oliveira V.R."/>
            <person name="Pereira H.A."/>
            <person name="Rossi A."/>
            <person name="Sena J.A.D."/>
            <person name="Silva C."/>
            <person name="de Souza R.F."/>
            <person name="Spinola L.A.F."/>
            <person name="Takita M.A."/>
            <person name="Tamura R.E."/>
            <person name="Teixeira E.C."/>
            <person name="Tezza R.I.D."/>
            <person name="Trindade dos Santos M."/>
            <person name="Truffi D."/>
            <person name="Tsai S.M."/>
            <person name="White F.F."/>
            <person name="Setubal J.C."/>
            <person name="Kitajima J.P."/>
        </authorList>
    </citation>
    <scope>NUCLEOTIDE SEQUENCE [LARGE SCALE GENOMIC DNA]</scope>
    <source>
        <strain>306</strain>
    </source>
</reference>
<protein>
    <recommendedName>
        <fullName evidence="1">NADH-quinone oxidoreductase subunit D</fullName>
        <ecNumber evidence="1">7.1.1.-</ecNumber>
    </recommendedName>
    <alternativeName>
        <fullName evidence="1">NADH dehydrogenase I subunit D</fullName>
    </alternativeName>
    <alternativeName>
        <fullName evidence="1">NDH-1 subunit D</fullName>
    </alternativeName>
</protein>
<proteinExistence type="inferred from homology"/>
<comment type="function">
    <text evidence="1">NDH-1 shuttles electrons from NADH, via FMN and iron-sulfur (Fe-S) centers, to quinones in the respiratory chain. The immediate electron acceptor for the enzyme in this species is believed to be ubiquinone. Couples the redox reaction to proton translocation (for every two electrons transferred, four hydrogen ions are translocated across the cytoplasmic membrane), and thus conserves the redox energy in a proton gradient.</text>
</comment>
<comment type="catalytic activity">
    <reaction evidence="1">
        <text>a quinone + NADH + 5 H(+)(in) = a quinol + NAD(+) + 4 H(+)(out)</text>
        <dbReference type="Rhea" id="RHEA:57888"/>
        <dbReference type="ChEBI" id="CHEBI:15378"/>
        <dbReference type="ChEBI" id="CHEBI:24646"/>
        <dbReference type="ChEBI" id="CHEBI:57540"/>
        <dbReference type="ChEBI" id="CHEBI:57945"/>
        <dbReference type="ChEBI" id="CHEBI:132124"/>
    </reaction>
</comment>
<comment type="subunit">
    <text evidence="1">NDH-1 is composed of 14 different subunits. Subunits NuoB, C, D, E, F, and G constitute the peripheral sector of the complex.</text>
</comment>
<comment type="subcellular location">
    <subcellularLocation>
        <location evidence="1">Cell inner membrane</location>
        <topology evidence="1">Peripheral membrane protein</topology>
        <orientation evidence="1">Cytoplasmic side</orientation>
    </subcellularLocation>
</comment>
<comment type="similarity">
    <text evidence="1">Belongs to the complex I 49 kDa subunit family.</text>
</comment>
<gene>
    <name evidence="1" type="primary">nuoD</name>
    <name type="ordered locus">XAC2701</name>
</gene>
<name>NUOD_XANAC</name>
<organism>
    <name type="scientific">Xanthomonas axonopodis pv. citri (strain 306)</name>
    <dbReference type="NCBI Taxonomy" id="190486"/>
    <lineage>
        <taxon>Bacteria</taxon>
        <taxon>Pseudomonadati</taxon>
        <taxon>Pseudomonadota</taxon>
        <taxon>Gammaproteobacteria</taxon>
        <taxon>Lysobacterales</taxon>
        <taxon>Lysobacteraceae</taxon>
        <taxon>Xanthomonas</taxon>
    </lineage>
</organism>
<evidence type="ECO:0000255" key="1">
    <source>
        <dbReference type="HAMAP-Rule" id="MF_01358"/>
    </source>
</evidence>
<feature type="chain" id="PRO_0000371948" description="NADH-quinone oxidoreductase subunit D">
    <location>
        <begin position="1"/>
        <end position="435"/>
    </location>
</feature>
<keyword id="KW-0997">Cell inner membrane</keyword>
<keyword id="KW-1003">Cell membrane</keyword>
<keyword id="KW-0472">Membrane</keyword>
<keyword id="KW-0520">NAD</keyword>
<keyword id="KW-0874">Quinone</keyword>
<keyword id="KW-1278">Translocase</keyword>
<keyword id="KW-0813">Transport</keyword>
<keyword id="KW-0830">Ubiquinone</keyword>